<gene>
    <name evidence="1" type="primary">lacB</name>
    <name type="ordered locus">SPG_1087</name>
</gene>
<accession>B5E4T1</accession>
<proteinExistence type="inferred from homology"/>
<evidence type="ECO:0000255" key="1">
    <source>
        <dbReference type="HAMAP-Rule" id="MF_01556"/>
    </source>
</evidence>
<protein>
    <recommendedName>
        <fullName evidence="1">Galactose-6-phosphate isomerase subunit LacB</fullName>
        <ecNumber evidence="1">5.3.1.26</ecNumber>
    </recommendedName>
</protein>
<keyword id="KW-0413">Isomerase</keyword>
<keyword id="KW-0423">Lactose metabolism</keyword>
<sequence length="171" mass="18958">MRIAIGCDHIVTDEKMAVSEFLKSKGYEVIDFGTYDHTRTHYPIFGKKVGEAVTSGQADLGVCICGTGVGINNAVNKVPGVRSALVRDMTTALYAKEQLNANVIGFGGKITGELLMCDIIEAFIHAEYKPTEENKKLIAKIEHVESHNAQQTDANFFTEFLEKWDRGEYHD</sequence>
<dbReference type="EC" id="5.3.1.26" evidence="1"/>
<dbReference type="EMBL" id="CP001015">
    <property type="protein sequence ID" value="ACF55132.1"/>
    <property type="molecule type" value="Genomic_DNA"/>
</dbReference>
<dbReference type="SMR" id="B5E4T1"/>
<dbReference type="KEGG" id="spx:SPG_1087"/>
<dbReference type="HOGENOM" id="CLU_091396_2_0_9"/>
<dbReference type="UniPathway" id="UPA00702">
    <property type="reaction ID" value="UER00714"/>
</dbReference>
<dbReference type="GO" id="GO:0050044">
    <property type="term" value="F:galactose-6-phosphate isomerase activity"/>
    <property type="evidence" value="ECO:0007669"/>
    <property type="project" value="UniProtKB-UniRule"/>
</dbReference>
<dbReference type="GO" id="GO:0004751">
    <property type="term" value="F:ribose-5-phosphate isomerase activity"/>
    <property type="evidence" value="ECO:0007669"/>
    <property type="project" value="TreeGrafter"/>
</dbReference>
<dbReference type="GO" id="GO:0019316">
    <property type="term" value="P:D-allose catabolic process"/>
    <property type="evidence" value="ECO:0007669"/>
    <property type="project" value="TreeGrafter"/>
</dbReference>
<dbReference type="GO" id="GO:0019388">
    <property type="term" value="P:galactose catabolic process"/>
    <property type="evidence" value="ECO:0007669"/>
    <property type="project" value="UniProtKB-UniPathway"/>
</dbReference>
<dbReference type="GO" id="GO:0019512">
    <property type="term" value="P:lactose catabolic process via tagatose-6-phosphate"/>
    <property type="evidence" value="ECO:0007669"/>
    <property type="project" value="UniProtKB-UniRule"/>
</dbReference>
<dbReference type="GO" id="GO:0009052">
    <property type="term" value="P:pentose-phosphate shunt, non-oxidative branch"/>
    <property type="evidence" value="ECO:0007669"/>
    <property type="project" value="TreeGrafter"/>
</dbReference>
<dbReference type="Gene3D" id="3.40.1400.10">
    <property type="entry name" value="Sugar-phosphate isomerase, RpiB/LacA/LacB"/>
    <property type="match status" value="1"/>
</dbReference>
<dbReference type="HAMAP" id="MF_01556">
    <property type="entry name" value="LacB"/>
    <property type="match status" value="1"/>
</dbReference>
<dbReference type="InterPro" id="IPR004784">
    <property type="entry name" value="LacB"/>
</dbReference>
<dbReference type="InterPro" id="IPR003500">
    <property type="entry name" value="RpiB_LacA_LacB"/>
</dbReference>
<dbReference type="InterPro" id="IPR036569">
    <property type="entry name" value="RpiB_LacA_LacB_sf"/>
</dbReference>
<dbReference type="NCBIfam" id="TIGR01119">
    <property type="entry name" value="lacB"/>
    <property type="match status" value="1"/>
</dbReference>
<dbReference type="NCBIfam" id="NF004051">
    <property type="entry name" value="PRK05571.1"/>
    <property type="match status" value="1"/>
</dbReference>
<dbReference type="NCBIfam" id="NF006381">
    <property type="entry name" value="PRK08622.1"/>
    <property type="match status" value="1"/>
</dbReference>
<dbReference type="NCBIfam" id="NF009258">
    <property type="entry name" value="PRK12615.1"/>
    <property type="match status" value="1"/>
</dbReference>
<dbReference type="NCBIfam" id="TIGR00689">
    <property type="entry name" value="rpiB_lacA_lacB"/>
    <property type="match status" value="1"/>
</dbReference>
<dbReference type="PANTHER" id="PTHR30345:SF0">
    <property type="entry name" value="DNA DAMAGE-REPAIR_TOLERATION PROTEIN DRT102"/>
    <property type="match status" value="1"/>
</dbReference>
<dbReference type="PANTHER" id="PTHR30345">
    <property type="entry name" value="RIBOSE-5-PHOSPHATE ISOMERASE B"/>
    <property type="match status" value="1"/>
</dbReference>
<dbReference type="Pfam" id="PF02502">
    <property type="entry name" value="LacAB_rpiB"/>
    <property type="match status" value="1"/>
</dbReference>
<dbReference type="PIRSF" id="PIRSF005384">
    <property type="entry name" value="RpiB_LacA_B"/>
    <property type="match status" value="1"/>
</dbReference>
<dbReference type="SUPFAM" id="SSF89623">
    <property type="entry name" value="Ribose/Galactose isomerase RpiB/AlsB"/>
    <property type="match status" value="1"/>
</dbReference>
<feature type="chain" id="PRO_1000147086" description="Galactose-6-phosphate isomerase subunit LacB">
    <location>
        <begin position="1"/>
        <end position="171"/>
    </location>
</feature>
<organism>
    <name type="scientific">Streptococcus pneumoniae serotype 19F (strain G54)</name>
    <dbReference type="NCBI Taxonomy" id="512566"/>
    <lineage>
        <taxon>Bacteria</taxon>
        <taxon>Bacillati</taxon>
        <taxon>Bacillota</taxon>
        <taxon>Bacilli</taxon>
        <taxon>Lactobacillales</taxon>
        <taxon>Streptococcaceae</taxon>
        <taxon>Streptococcus</taxon>
    </lineage>
</organism>
<name>LACB_STRP4</name>
<reference key="1">
    <citation type="journal article" date="2001" name="Microb. Drug Resist.">
        <title>Annotated draft genomic sequence from a Streptococcus pneumoniae type 19F clinical isolate.</title>
        <authorList>
            <person name="Dopazo J."/>
            <person name="Mendoza A."/>
            <person name="Herrero J."/>
            <person name="Caldara F."/>
            <person name="Humbert Y."/>
            <person name="Friedli L."/>
            <person name="Guerrier M."/>
            <person name="Grand-Schenk E."/>
            <person name="Gandin C."/>
            <person name="de Francesco M."/>
            <person name="Polissi A."/>
            <person name="Buell G."/>
            <person name="Feger G."/>
            <person name="Garcia E."/>
            <person name="Peitsch M."/>
            <person name="Garcia-Bustos J.F."/>
        </authorList>
    </citation>
    <scope>NUCLEOTIDE SEQUENCE [LARGE SCALE GENOMIC DNA]</scope>
    <source>
        <strain>G54</strain>
    </source>
</reference>
<reference key="2">
    <citation type="submission" date="2008-03" db="EMBL/GenBank/DDBJ databases">
        <title>Pneumococcal beta glucoside metabolism investigated by whole genome comparison.</title>
        <authorList>
            <person name="Mulas L."/>
            <person name="Trappetti C."/>
            <person name="Hakenbeck R."/>
            <person name="Iannelli F."/>
            <person name="Pozzi G."/>
            <person name="Davidsen T.M."/>
            <person name="Tettelin H."/>
            <person name="Oggioni M."/>
        </authorList>
    </citation>
    <scope>NUCLEOTIDE SEQUENCE [LARGE SCALE GENOMIC DNA]</scope>
    <source>
        <strain>G54</strain>
    </source>
</reference>
<comment type="catalytic activity">
    <reaction evidence="1">
        <text>aldehydo-D-galactose 6-phosphate = keto-D-tagatose 6-phosphate</text>
        <dbReference type="Rhea" id="RHEA:13033"/>
        <dbReference type="ChEBI" id="CHEBI:58255"/>
        <dbReference type="ChEBI" id="CHEBI:134283"/>
        <dbReference type="EC" id="5.3.1.26"/>
    </reaction>
</comment>
<comment type="pathway">
    <text evidence="1">Carbohydrate metabolism; D-galactose 6-phosphate degradation; D-tagatose 6-phosphate from D-galactose 6-phosphate: step 1/1.</text>
</comment>
<comment type="subunit">
    <text evidence="1">Heteromultimeric protein consisting of LacA and LacB.</text>
</comment>
<comment type="similarity">
    <text evidence="1">Belongs to the LacAB/RpiB family.</text>
</comment>